<dbReference type="EMBL" id="CP000230">
    <property type="protein sequence ID" value="ABC22664.1"/>
    <property type="molecule type" value="Genomic_DNA"/>
</dbReference>
<dbReference type="RefSeq" id="WP_011389617.1">
    <property type="nucleotide sequence ID" value="NC_007643.1"/>
</dbReference>
<dbReference type="RefSeq" id="YP_426951.1">
    <property type="nucleotide sequence ID" value="NC_007643.1"/>
</dbReference>
<dbReference type="SMR" id="Q2RT81"/>
<dbReference type="STRING" id="269796.Rru_A1864"/>
<dbReference type="EnsemblBacteria" id="ABC22664">
    <property type="protein sequence ID" value="ABC22664"/>
    <property type="gene ID" value="Rru_A1864"/>
</dbReference>
<dbReference type="KEGG" id="rru:Rru_A1864"/>
<dbReference type="PATRIC" id="fig|269796.9.peg.1942"/>
<dbReference type="eggNOG" id="COG0691">
    <property type="taxonomic scope" value="Bacteria"/>
</dbReference>
<dbReference type="HOGENOM" id="CLU_108953_0_1_5"/>
<dbReference type="PhylomeDB" id="Q2RT81"/>
<dbReference type="Proteomes" id="UP000001929">
    <property type="component" value="Chromosome"/>
</dbReference>
<dbReference type="GO" id="GO:0005829">
    <property type="term" value="C:cytosol"/>
    <property type="evidence" value="ECO:0007669"/>
    <property type="project" value="TreeGrafter"/>
</dbReference>
<dbReference type="GO" id="GO:0003723">
    <property type="term" value="F:RNA binding"/>
    <property type="evidence" value="ECO:0007669"/>
    <property type="project" value="UniProtKB-UniRule"/>
</dbReference>
<dbReference type="GO" id="GO:0070929">
    <property type="term" value="P:trans-translation"/>
    <property type="evidence" value="ECO:0007669"/>
    <property type="project" value="UniProtKB-UniRule"/>
</dbReference>
<dbReference type="CDD" id="cd09294">
    <property type="entry name" value="SmpB"/>
    <property type="match status" value="1"/>
</dbReference>
<dbReference type="Gene3D" id="2.40.280.10">
    <property type="match status" value="1"/>
</dbReference>
<dbReference type="HAMAP" id="MF_00023">
    <property type="entry name" value="SmpB"/>
    <property type="match status" value="1"/>
</dbReference>
<dbReference type="InterPro" id="IPR023620">
    <property type="entry name" value="SmpB"/>
</dbReference>
<dbReference type="InterPro" id="IPR000037">
    <property type="entry name" value="SsrA-bd_prot"/>
</dbReference>
<dbReference type="InterPro" id="IPR020081">
    <property type="entry name" value="SsrA-bd_prot_CS"/>
</dbReference>
<dbReference type="NCBIfam" id="NF003843">
    <property type="entry name" value="PRK05422.1"/>
    <property type="match status" value="1"/>
</dbReference>
<dbReference type="NCBIfam" id="TIGR00086">
    <property type="entry name" value="smpB"/>
    <property type="match status" value="1"/>
</dbReference>
<dbReference type="PANTHER" id="PTHR30308:SF2">
    <property type="entry name" value="SSRA-BINDING PROTEIN"/>
    <property type="match status" value="1"/>
</dbReference>
<dbReference type="PANTHER" id="PTHR30308">
    <property type="entry name" value="TMRNA-BINDING COMPONENT OF TRANS-TRANSLATION TAGGING COMPLEX"/>
    <property type="match status" value="1"/>
</dbReference>
<dbReference type="Pfam" id="PF01668">
    <property type="entry name" value="SmpB"/>
    <property type="match status" value="1"/>
</dbReference>
<dbReference type="SUPFAM" id="SSF74982">
    <property type="entry name" value="Small protein B (SmpB)"/>
    <property type="match status" value="1"/>
</dbReference>
<dbReference type="PROSITE" id="PS01317">
    <property type="entry name" value="SSRP"/>
    <property type="match status" value="1"/>
</dbReference>
<keyword id="KW-0963">Cytoplasm</keyword>
<keyword id="KW-1185">Reference proteome</keyword>
<keyword id="KW-0694">RNA-binding</keyword>
<comment type="function">
    <text evidence="1">Required for rescue of stalled ribosomes mediated by trans-translation. Binds to transfer-messenger RNA (tmRNA), required for stable association of tmRNA with ribosomes. tmRNA and SmpB together mimic tRNA shape, replacing the anticodon stem-loop with SmpB. tmRNA is encoded by the ssrA gene; the 2 termini fold to resemble tRNA(Ala) and it encodes a 'tag peptide', a short internal open reading frame. During trans-translation Ala-aminoacylated tmRNA acts like a tRNA, entering the A-site of stalled ribosomes, displacing the stalled mRNA. The ribosome then switches to translate the ORF on the tmRNA; the nascent peptide is terminated with the 'tag peptide' encoded by the tmRNA and targeted for degradation. The ribosome is freed to recommence translation, which seems to be the essential function of trans-translation.</text>
</comment>
<comment type="subcellular location">
    <subcellularLocation>
        <location evidence="1">Cytoplasm</location>
    </subcellularLocation>
    <text evidence="1">The tmRNA-SmpB complex associates with stalled 70S ribosomes.</text>
</comment>
<comment type="similarity">
    <text evidence="1">Belongs to the SmpB family.</text>
</comment>
<sequence length="160" mass="18252">MARAGNSLISHGRVAENRRARHDYSIEETIEAGLILVGTEVKSLRTGRANIADSYAGPKSGELYLYNAYIPDWTQAVKAFAHEPRQPRKLLVHRREARRLISAINKDGMTLVPLYLYFNDRGFAKVQLGLAKGRKAHDKRQAIKEREWNRDKARVLRDKG</sequence>
<gene>
    <name evidence="1" type="primary">smpB</name>
    <name type="ordered locus">Rru_A1864</name>
</gene>
<reference key="1">
    <citation type="journal article" date="2011" name="Stand. Genomic Sci.">
        <title>Complete genome sequence of Rhodospirillum rubrum type strain (S1).</title>
        <authorList>
            <person name="Munk A.C."/>
            <person name="Copeland A."/>
            <person name="Lucas S."/>
            <person name="Lapidus A."/>
            <person name="Del Rio T.G."/>
            <person name="Barry K."/>
            <person name="Detter J.C."/>
            <person name="Hammon N."/>
            <person name="Israni S."/>
            <person name="Pitluck S."/>
            <person name="Brettin T."/>
            <person name="Bruce D."/>
            <person name="Han C."/>
            <person name="Tapia R."/>
            <person name="Gilna P."/>
            <person name="Schmutz J."/>
            <person name="Larimer F."/>
            <person name="Land M."/>
            <person name="Kyrpides N.C."/>
            <person name="Mavromatis K."/>
            <person name="Richardson P."/>
            <person name="Rohde M."/>
            <person name="Goeker M."/>
            <person name="Klenk H.P."/>
            <person name="Zhang Y."/>
            <person name="Roberts G.P."/>
            <person name="Reslewic S."/>
            <person name="Schwartz D.C."/>
        </authorList>
    </citation>
    <scope>NUCLEOTIDE SEQUENCE [LARGE SCALE GENOMIC DNA]</scope>
    <source>
        <strain>ATCC 11170 / ATH 1.1.1 / DSM 467 / LMG 4362 / NCIMB 8255 / S1</strain>
    </source>
</reference>
<organism>
    <name type="scientific">Rhodospirillum rubrum (strain ATCC 11170 / ATH 1.1.1 / DSM 467 / LMG 4362 / NCIMB 8255 / S1)</name>
    <dbReference type="NCBI Taxonomy" id="269796"/>
    <lineage>
        <taxon>Bacteria</taxon>
        <taxon>Pseudomonadati</taxon>
        <taxon>Pseudomonadota</taxon>
        <taxon>Alphaproteobacteria</taxon>
        <taxon>Rhodospirillales</taxon>
        <taxon>Rhodospirillaceae</taxon>
        <taxon>Rhodospirillum</taxon>
    </lineage>
</organism>
<accession>Q2RT81</accession>
<proteinExistence type="inferred from homology"/>
<evidence type="ECO:0000255" key="1">
    <source>
        <dbReference type="HAMAP-Rule" id="MF_00023"/>
    </source>
</evidence>
<name>SSRP_RHORT</name>
<feature type="chain" id="PRO_0000331087" description="SsrA-binding protein">
    <location>
        <begin position="1"/>
        <end position="160"/>
    </location>
</feature>
<protein>
    <recommendedName>
        <fullName evidence="1">SsrA-binding protein</fullName>
    </recommendedName>
    <alternativeName>
        <fullName evidence="1">Small protein B</fullName>
    </alternativeName>
</protein>